<keyword id="KW-0025">Alternative splicing</keyword>
<keyword id="KW-0891">Chondrogenesis</keyword>
<keyword id="KW-0165">Cleavage on pair of basic residues</keyword>
<keyword id="KW-0217">Developmental protein</keyword>
<keyword id="KW-0221">Differentiation</keyword>
<keyword id="KW-1015">Disulfide bond</keyword>
<keyword id="KW-0272">Extracellular matrix</keyword>
<keyword id="KW-0325">Glycoprotein</keyword>
<keyword id="KW-0472">Membrane</keyword>
<keyword id="KW-1267">Proteomics identification</keyword>
<keyword id="KW-1185">Reference proteome</keyword>
<keyword id="KW-0964">Secreted</keyword>
<keyword id="KW-0812">Transmembrane</keyword>
<keyword id="KW-1133">Transmembrane helix</keyword>
<gene>
    <name evidence="8" type="primary">CNMD</name>
    <name evidence="8" type="synonym">CHMI</name>
    <name evidence="8" type="synonym">LECT1</name>
    <name evidence="8" type="synonym">MYETS1</name>
</gene>
<dbReference type="EMBL" id="AB006000">
    <property type="protein sequence ID" value="BAA33443.1"/>
    <property type="molecule type" value="mRNA"/>
</dbReference>
<dbReference type="EMBL" id="AF050147">
    <property type="protein sequence ID" value="AAC98971.1"/>
    <property type="molecule type" value="Genomic_DNA"/>
</dbReference>
<dbReference type="EMBL" id="CR541910">
    <property type="protein sequence ID" value="CAG46708.1"/>
    <property type="molecule type" value="mRNA"/>
</dbReference>
<dbReference type="EMBL" id="AL139085">
    <property type="status" value="NOT_ANNOTATED_CDS"/>
    <property type="molecule type" value="Genomic_DNA"/>
</dbReference>
<dbReference type="EMBL" id="AL139089">
    <property type="status" value="NOT_ANNOTATED_CDS"/>
    <property type="molecule type" value="Genomic_DNA"/>
</dbReference>
<dbReference type="EMBL" id="BC025659">
    <property type="protein sequence ID" value="AAH25659.1"/>
    <property type="molecule type" value="mRNA"/>
</dbReference>
<dbReference type="EMBL" id="AB021290">
    <property type="protein sequence ID" value="BAA77384.1"/>
    <property type="molecule type" value="Genomic_DNA"/>
</dbReference>
<dbReference type="EMBL" id="AB005999">
    <property type="protein sequence ID" value="BAA86262.1"/>
    <property type="molecule type" value="mRNA"/>
</dbReference>
<dbReference type="CCDS" id="CCDS45051.1">
    <molecule id="O75829-2"/>
</dbReference>
<dbReference type="CCDS" id="CCDS9437.1">
    <molecule id="O75829-1"/>
</dbReference>
<dbReference type="RefSeq" id="NP_001011705.1">
    <molecule id="O75829-2"/>
    <property type="nucleotide sequence ID" value="NM_001011705.2"/>
</dbReference>
<dbReference type="RefSeq" id="NP_008946.1">
    <molecule id="O75829-1"/>
    <property type="nucleotide sequence ID" value="NM_007015.3"/>
</dbReference>
<dbReference type="SMR" id="O75829"/>
<dbReference type="BioGRID" id="116245">
    <property type="interactions" value="7"/>
</dbReference>
<dbReference type="FunCoup" id="O75829">
    <property type="interactions" value="71"/>
</dbReference>
<dbReference type="IntAct" id="O75829">
    <property type="interactions" value="7"/>
</dbReference>
<dbReference type="STRING" id="9606.ENSP00000367198"/>
<dbReference type="GlyCosmos" id="O75829">
    <property type="glycosylation" value="1 site, No reported glycans"/>
</dbReference>
<dbReference type="GlyGen" id="O75829">
    <property type="glycosylation" value="1 site"/>
</dbReference>
<dbReference type="iPTMnet" id="O75829"/>
<dbReference type="PhosphoSitePlus" id="O75829"/>
<dbReference type="BioMuta" id="CNMD"/>
<dbReference type="jPOST" id="O75829"/>
<dbReference type="MassIVE" id="O75829"/>
<dbReference type="PaxDb" id="9606-ENSP00000367198"/>
<dbReference type="PeptideAtlas" id="O75829"/>
<dbReference type="ProteomicsDB" id="50217">
    <molecule id="O75829-1"/>
</dbReference>
<dbReference type="ProteomicsDB" id="50218">
    <molecule id="O75829-2"/>
</dbReference>
<dbReference type="Antibodypedia" id="24240">
    <property type="antibodies" value="198 antibodies from 28 providers"/>
</dbReference>
<dbReference type="DNASU" id="11061"/>
<dbReference type="Ensembl" id="ENST00000377962.8">
    <molecule id="O75829-1"/>
    <property type="protein sequence ID" value="ENSP00000367198.3"/>
    <property type="gene ID" value="ENSG00000136110.13"/>
</dbReference>
<dbReference type="Ensembl" id="ENST00000448904.6">
    <molecule id="O75829-2"/>
    <property type="protein sequence ID" value="ENSP00000388576.2"/>
    <property type="gene ID" value="ENSG00000136110.13"/>
</dbReference>
<dbReference type="GeneID" id="11061"/>
<dbReference type="KEGG" id="hsa:11061"/>
<dbReference type="MANE-Select" id="ENST00000377962.8">
    <property type="protein sequence ID" value="ENSP00000367198.3"/>
    <property type="RefSeq nucleotide sequence ID" value="NM_007015.3"/>
    <property type="RefSeq protein sequence ID" value="NP_008946.1"/>
</dbReference>
<dbReference type="UCSC" id="uc001vhf.4">
    <molecule id="O75829-1"/>
    <property type="organism name" value="human"/>
</dbReference>
<dbReference type="AGR" id="HGNC:17005"/>
<dbReference type="CTD" id="11061"/>
<dbReference type="DisGeNET" id="11061"/>
<dbReference type="GeneCards" id="CNMD"/>
<dbReference type="HGNC" id="HGNC:17005">
    <property type="gene designation" value="CNMD"/>
</dbReference>
<dbReference type="HPA" id="ENSG00000136110">
    <property type="expression patterns" value="Group enriched (brain, choroid plexus, retina, salivary gland, thyroid gland)"/>
</dbReference>
<dbReference type="MIM" id="605147">
    <property type="type" value="gene"/>
</dbReference>
<dbReference type="neXtProt" id="NX_O75829"/>
<dbReference type="OpenTargets" id="ENSG00000136110"/>
<dbReference type="PharmGKB" id="PA134897668"/>
<dbReference type="VEuPathDB" id="HostDB:ENSG00000136110"/>
<dbReference type="eggNOG" id="ENOG502QVPC">
    <property type="taxonomic scope" value="Eukaryota"/>
</dbReference>
<dbReference type="GeneTree" id="ENSGT00480000042679"/>
<dbReference type="HOGENOM" id="CLU_071852_0_0_1"/>
<dbReference type="InParanoid" id="O75829"/>
<dbReference type="OMA" id="GNLPIFW"/>
<dbReference type="OrthoDB" id="5985282at2759"/>
<dbReference type="PAN-GO" id="O75829">
    <property type="GO annotations" value="2 GO annotations based on evolutionary models"/>
</dbReference>
<dbReference type="PhylomeDB" id="O75829"/>
<dbReference type="TreeFam" id="TF329712"/>
<dbReference type="PathwayCommons" id="O75829"/>
<dbReference type="SignaLink" id="O75829"/>
<dbReference type="BioGRID-ORCS" id="11061">
    <property type="hits" value="9 hits in 1135 CRISPR screens"/>
</dbReference>
<dbReference type="ChiTaRS" id="CNMD">
    <property type="organism name" value="human"/>
</dbReference>
<dbReference type="GeneWiki" id="LECT1"/>
<dbReference type="GenomeRNAi" id="11061"/>
<dbReference type="Pharos" id="O75829">
    <property type="development level" value="Tbio"/>
</dbReference>
<dbReference type="PRO" id="PR:O75829"/>
<dbReference type="Proteomes" id="UP000005640">
    <property type="component" value="Chromosome 13"/>
</dbReference>
<dbReference type="RNAct" id="O75829">
    <property type="molecule type" value="protein"/>
</dbReference>
<dbReference type="Bgee" id="ENSG00000136110">
    <property type="expression patterns" value="Expressed in tibia and 63 other cell types or tissues"/>
</dbReference>
<dbReference type="ExpressionAtlas" id="O75829">
    <property type="expression patterns" value="baseline and differential"/>
</dbReference>
<dbReference type="GO" id="GO:0012505">
    <property type="term" value="C:endomembrane system"/>
    <property type="evidence" value="ECO:0007669"/>
    <property type="project" value="UniProtKB-SubCell"/>
</dbReference>
<dbReference type="GO" id="GO:0005576">
    <property type="term" value="C:extracellular region"/>
    <property type="evidence" value="ECO:0007669"/>
    <property type="project" value="UniProtKB-KW"/>
</dbReference>
<dbReference type="GO" id="GO:0016020">
    <property type="term" value="C:membrane"/>
    <property type="evidence" value="ECO:0007669"/>
    <property type="project" value="UniProtKB-KW"/>
</dbReference>
<dbReference type="GO" id="GO:0051216">
    <property type="term" value="P:cartilage development"/>
    <property type="evidence" value="ECO:0007669"/>
    <property type="project" value="UniProtKB-KW"/>
</dbReference>
<dbReference type="GO" id="GO:0030154">
    <property type="term" value="P:cell differentiation"/>
    <property type="evidence" value="ECO:0007669"/>
    <property type="project" value="UniProtKB-KW"/>
</dbReference>
<dbReference type="GO" id="GO:0016525">
    <property type="term" value="P:negative regulation of angiogenesis"/>
    <property type="evidence" value="ECO:0000314"/>
    <property type="project" value="UniProtKB"/>
</dbReference>
<dbReference type="GO" id="GO:0001937">
    <property type="term" value="P:negative regulation of endothelial cell proliferation"/>
    <property type="evidence" value="ECO:0000318"/>
    <property type="project" value="GO_Central"/>
</dbReference>
<dbReference type="GO" id="GO:0006029">
    <property type="term" value="P:proteoglycan metabolic process"/>
    <property type="evidence" value="ECO:0000304"/>
    <property type="project" value="ProtInc"/>
</dbReference>
<dbReference type="GO" id="GO:0001501">
    <property type="term" value="P:skeletal system development"/>
    <property type="evidence" value="ECO:0000304"/>
    <property type="project" value="ProtInc"/>
</dbReference>
<dbReference type="FunFam" id="3.30.390.150:FF:000001">
    <property type="entry name" value="leukocyte cell-derived chemotaxin 1"/>
    <property type="match status" value="1"/>
</dbReference>
<dbReference type="Gene3D" id="3.30.390.150">
    <property type="match status" value="1"/>
</dbReference>
<dbReference type="InterPro" id="IPR007084">
    <property type="entry name" value="BRICHOS_dom"/>
</dbReference>
<dbReference type="InterPro" id="IPR043405">
    <property type="entry name" value="Chondromodulin/Tenomodulin"/>
</dbReference>
<dbReference type="PANTHER" id="PTHR14064">
    <property type="entry name" value="CHONDROMODULIN-RELATED"/>
    <property type="match status" value="1"/>
</dbReference>
<dbReference type="PANTHER" id="PTHR14064:SF6">
    <property type="entry name" value="LEUKOCYTE CELL-DERIVED CHEMOTAXIN 1"/>
    <property type="match status" value="1"/>
</dbReference>
<dbReference type="Pfam" id="PF04089">
    <property type="entry name" value="BRICHOS"/>
    <property type="match status" value="1"/>
</dbReference>
<dbReference type="SMART" id="SM01039">
    <property type="entry name" value="BRICHOS"/>
    <property type="match status" value="1"/>
</dbReference>
<dbReference type="PROSITE" id="PS50869">
    <property type="entry name" value="BRICHOS"/>
    <property type="match status" value="1"/>
</dbReference>
<feature type="chain" id="PRO_0000005346" description="Chondrosurfactant protein" evidence="1">
    <location>
        <begin position="1"/>
        <end position="210"/>
    </location>
</feature>
<feature type="propeptide" id="PRO_0000005347" evidence="2">
    <location>
        <begin position="211"/>
        <end position="214"/>
    </location>
</feature>
<feature type="chain" id="PRO_0000005348" description="Chondromodulin-1">
    <location>
        <begin position="215"/>
        <end position="334"/>
    </location>
</feature>
<feature type="transmembrane region" description="Helical" evidence="2">
    <location>
        <begin position="45"/>
        <end position="65"/>
    </location>
</feature>
<feature type="domain" description="BRICHOS" evidence="3">
    <location>
        <begin position="104"/>
        <end position="201"/>
    </location>
</feature>
<feature type="region of interest" description="Disordered" evidence="4">
    <location>
        <begin position="218"/>
        <end position="268"/>
    </location>
</feature>
<feature type="compositionally biased region" description="Polar residues" evidence="4">
    <location>
        <begin position="242"/>
        <end position="257"/>
    </location>
</feature>
<feature type="glycosylation site" description="N-linked (GlcNAc...) asparagine" evidence="2">
    <location>
        <position position="243"/>
    </location>
</feature>
<feature type="disulfide bond" evidence="1">
    <location>
        <begin position="131"/>
        <end position="193"/>
    </location>
</feature>
<feature type="disulfide bond" evidence="1">
    <location>
        <begin position="282"/>
        <end position="286"/>
    </location>
</feature>
<feature type="disulfide bond" evidence="1">
    <location>
        <begin position="283"/>
        <end position="323"/>
    </location>
</feature>
<feature type="disulfide bond" evidence="1">
    <location>
        <begin position="293"/>
        <end position="317"/>
    </location>
</feature>
<feature type="disulfide bond" evidence="1">
    <location>
        <begin position="297"/>
        <end position="313"/>
    </location>
</feature>
<feature type="splice variant" id="VSP_038380" description="In isoform 2." evidence="6">
    <location>
        <position position="264"/>
    </location>
</feature>
<feature type="sequence variant" id="VAR_048719" description="In dbSNP:rs3742298.">
    <original>F</original>
    <variation>L</variation>
    <location>
        <position position="116"/>
    </location>
</feature>
<feature type="sequence variant" id="VAR_024413" description="In dbSNP:rs7330220.">
    <original>V</original>
    <variation>I</variation>
    <location>
        <position position="175"/>
    </location>
</feature>
<sequence length="334" mass="37102">MTENSDKVPIALVGPDDVEFCSPPAYATLTVKPSSPARLLKVGAVVLISGAVLLLFGAIGAFYFWKGSDSHIYNVHYTMSINGKLQDGSMEIDAGNNLETFKMGSGAEEAIAVNDFQNGITGIRFAGGEKCYIKAQVKARIPEVGAVTKQSISSKLEGKIMPVKYEENSLIWVAVDQPVKDNSFLSSKVLELCGDLPIFWLKPTYPKEIQRERREVVRKIVPTTTKRPHSGPRSNPGAGRLNNETRPSVQEDSQAFNPDNPYHQQEGESMTFDPRLDHEGICCIECRRSYTHCQKICEPLGGYYPWPYNYQGCRSACRVIMPCSWWVARILGMV</sequence>
<accession>O75829</accession>
<accession>Q5TAM4</accession>
<accession>Q8TAY6</accession>
<accession>Q9UM18</accession>
<protein>
    <recommendedName>
        <fullName evidence="7">Leukocyte cell-derived chemotaxin 1</fullName>
    </recommendedName>
    <alternativeName>
        <fullName evidence="8">Chondromodulin</fullName>
    </alternativeName>
    <component>
        <recommendedName>
            <fullName>Chondrosurfactant protein</fullName>
            <shortName>CH-SP</shortName>
        </recommendedName>
    </component>
    <component>
        <recommendedName>
            <fullName>Chondromodulin-1</fullName>
        </recommendedName>
        <alternativeName>
            <fullName>Chondromodulin-I</fullName>
            <shortName>ChM-I</shortName>
        </alternativeName>
    </component>
</protein>
<proteinExistence type="evidence at protein level"/>
<reference key="1">
    <citation type="journal article" date="1998" name="Biochem. Biophys. Res. Commun.">
        <title>Expression of cartilage-specific functional matrix chondromodulin-I mRNA in rabbit growth plate chondrocytes and its responsiveness to growth stimuli in vitro.</title>
        <authorList>
            <person name="Shukunami C."/>
            <person name="Hiraki Y."/>
        </authorList>
    </citation>
    <scope>NUCLEOTIDE SEQUENCE [MRNA] (ISOFORM 1)</scope>
    <source>
        <tissue>Chondrosarcoma</tissue>
    </source>
</reference>
<reference key="2">
    <citation type="journal article" date="1999" name="Eur. J. Biochem.">
        <title>Molecular cloning of human chondromodulin-I, a cartilage-derived growth modulating factor, and its expression in Chinese hamster ovary cells.</title>
        <authorList>
            <person name="Hiraki Y."/>
            <person name="Mitsui K."/>
            <person name="Endo N."/>
            <person name="Takahashi K."/>
            <person name="Hayami T."/>
            <person name="Inoue H."/>
            <person name="Shukunami C."/>
            <person name="Tokunaga K."/>
            <person name="Kono T."/>
            <person name="Yamada M."/>
            <person name="Takahashi H.E."/>
            <person name="Kondo J."/>
        </authorList>
    </citation>
    <scope>NUCLEOTIDE SEQUENCE [GENOMIC DNA / MRNA] (ISOFORM 1)</scope>
    <source>
        <tissue>Chondrosarcoma</tissue>
    </source>
</reference>
<reference key="3">
    <citation type="submission" date="2004-06" db="EMBL/GenBank/DDBJ databases">
        <title>Cloning of human full open reading frames in Gateway(TM) system entry vector (pDONR201).</title>
        <authorList>
            <person name="Halleck A."/>
            <person name="Ebert L."/>
            <person name="Mkoundinya M."/>
            <person name="Schick M."/>
            <person name="Eisenstein S."/>
            <person name="Neubert P."/>
            <person name="Kstrang K."/>
            <person name="Schatten R."/>
            <person name="Shen B."/>
            <person name="Henze S."/>
            <person name="Mar W."/>
            <person name="Korn B."/>
            <person name="Zuo D."/>
            <person name="Hu Y."/>
            <person name="LaBaer J."/>
        </authorList>
    </citation>
    <scope>NUCLEOTIDE SEQUENCE [LARGE SCALE MRNA] (ISOFORM 1)</scope>
</reference>
<reference key="4">
    <citation type="journal article" date="2004" name="Nature">
        <title>The DNA sequence and analysis of human chromosome 13.</title>
        <authorList>
            <person name="Dunham A."/>
            <person name="Matthews L.H."/>
            <person name="Burton J."/>
            <person name="Ashurst J.L."/>
            <person name="Howe K.L."/>
            <person name="Ashcroft K.J."/>
            <person name="Beare D.M."/>
            <person name="Burford D.C."/>
            <person name="Hunt S.E."/>
            <person name="Griffiths-Jones S."/>
            <person name="Jones M.C."/>
            <person name="Keenan S.J."/>
            <person name="Oliver K."/>
            <person name="Scott C.E."/>
            <person name="Ainscough R."/>
            <person name="Almeida J.P."/>
            <person name="Ambrose K.D."/>
            <person name="Andrews D.T."/>
            <person name="Ashwell R.I.S."/>
            <person name="Babbage A.K."/>
            <person name="Bagguley C.L."/>
            <person name="Bailey J."/>
            <person name="Bannerjee R."/>
            <person name="Barlow K.F."/>
            <person name="Bates K."/>
            <person name="Beasley H."/>
            <person name="Bird C.P."/>
            <person name="Bray-Allen S."/>
            <person name="Brown A.J."/>
            <person name="Brown J.Y."/>
            <person name="Burrill W."/>
            <person name="Carder C."/>
            <person name="Carter N.P."/>
            <person name="Chapman J.C."/>
            <person name="Clamp M.E."/>
            <person name="Clark S.Y."/>
            <person name="Clarke G."/>
            <person name="Clee C.M."/>
            <person name="Clegg S.C."/>
            <person name="Cobley V."/>
            <person name="Collins J.E."/>
            <person name="Corby N."/>
            <person name="Coville G.J."/>
            <person name="Deloukas P."/>
            <person name="Dhami P."/>
            <person name="Dunham I."/>
            <person name="Dunn M."/>
            <person name="Earthrowl M.E."/>
            <person name="Ellington A.G."/>
            <person name="Faulkner L."/>
            <person name="Frankish A.G."/>
            <person name="Frankland J."/>
            <person name="French L."/>
            <person name="Garner P."/>
            <person name="Garnett J."/>
            <person name="Gilbert J.G.R."/>
            <person name="Gilson C.J."/>
            <person name="Ghori J."/>
            <person name="Grafham D.V."/>
            <person name="Gribble S.M."/>
            <person name="Griffiths C."/>
            <person name="Hall R.E."/>
            <person name="Hammond S."/>
            <person name="Harley J.L."/>
            <person name="Hart E.A."/>
            <person name="Heath P.D."/>
            <person name="Howden P.J."/>
            <person name="Huckle E.J."/>
            <person name="Hunt P.J."/>
            <person name="Hunt A.R."/>
            <person name="Johnson C."/>
            <person name="Johnson D."/>
            <person name="Kay M."/>
            <person name="Kimberley A.M."/>
            <person name="King A."/>
            <person name="Laird G.K."/>
            <person name="Langford C.J."/>
            <person name="Lawlor S."/>
            <person name="Leongamornlert D.A."/>
            <person name="Lloyd D.M."/>
            <person name="Lloyd C."/>
            <person name="Loveland J.E."/>
            <person name="Lovell J."/>
            <person name="Martin S."/>
            <person name="Mashreghi-Mohammadi M."/>
            <person name="McLaren S.J."/>
            <person name="McMurray A."/>
            <person name="Milne S."/>
            <person name="Moore M.J.F."/>
            <person name="Nickerson T."/>
            <person name="Palmer S.A."/>
            <person name="Pearce A.V."/>
            <person name="Peck A.I."/>
            <person name="Pelan S."/>
            <person name="Phillimore B."/>
            <person name="Porter K.M."/>
            <person name="Rice C.M."/>
            <person name="Searle S."/>
            <person name="Sehra H.K."/>
            <person name="Shownkeen R."/>
            <person name="Skuce C.D."/>
            <person name="Smith M."/>
            <person name="Steward C.A."/>
            <person name="Sycamore N."/>
            <person name="Tester J."/>
            <person name="Thomas D.W."/>
            <person name="Tracey A."/>
            <person name="Tromans A."/>
            <person name="Tubby B."/>
            <person name="Wall M."/>
            <person name="Wallis J.M."/>
            <person name="West A.P."/>
            <person name="Whitehead S.L."/>
            <person name="Willey D.L."/>
            <person name="Wilming L."/>
            <person name="Wray P.W."/>
            <person name="Wright M.W."/>
            <person name="Young L."/>
            <person name="Coulson A."/>
            <person name="Durbin R.M."/>
            <person name="Hubbard T."/>
            <person name="Sulston J.E."/>
            <person name="Beck S."/>
            <person name="Bentley D.R."/>
            <person name="Rogers J."/>
            <person name="Ross M.T."/>
        </authorList>
    </citation>
    <scope>NUCLEOTIDE SEQUENCE [LARGE SCALE GENOMIC DNA]</scope>
</reference>
<reference key="5">
    <citation type="journal article" date="2004" name="Genome Res.">
        <title>The status, quality, and expansion of the NIH full-length cDNA project: the Mammalian Gene Collection (MGC).</title>
        <authorList>
            <consortium name="The MGC Project Team"/>
        </authorList>
    </citation>
    <scope>NUCLEOTIDE SEQUENCE [LARGE SCALE MRNA] (ISOFORM 2)</scope>
    <source>
        <tissue>Brain</tissue>
    </source>
</reference>
<reference key="6">
    <citation type="submission" date="1998-12" db="EMBL/GenBank/DDBJ databases">
        <title>Human chondromodulin-1 gene promoter.</title>
        <authorList>
            <person name="Ozono K."/>
        </authorList>
    </citation>
    <scope>NUCLEOTIDE SEQUENCE [GENOMIC DNA] OF 1-20</scope>
</reference>
<reference key="7">
    <citation type="journal article" date="1999" name="FEBS Lett.">
        <title>Specific loss of chondromodulin-I gene expression in chondrosarcoma and the suppression of tumor angiogenesis and growth by its recombinant protein in vivo.</title>
        <authorList>
            <person name="Hayami T."/>
            <person name="Shukunami C."/>
            <person name="Mitsui K."/>
            <person name="Endo N."/>
            <person name="Tokunaga K."/>
            <person name="Kondo J."/>
            <person name="Takahashi H.E."/>
            <person name="Hiraki Y."/>
        </authorList>
    </citation>
    <scope>NUCLEOTIDE SEQUENCE [MRNA] OF 215-334 (ISOFORM 1)</scope>
</reference>
<reference key="8">
    <citation type="journal article" date="2000" name="Pediatr. Nephrol.">
        <title>Chondromodulin-I as a novel cartilage-specific growth-modulating factor.</title>
        <authorList>
            <person name="Hiraki Y."/>
            <person name="Shukunami C."/>
        </authorList>
    </citation>
    <scope>REVIEW</scope>
</reference>
<reference key="9">
    <citation type="journal article" date="2006" name="Nat. Med.">
        <title>Chondromodulin-I maintains cardiac valvular function by preventing angiogenesis.</title>
        <authorList>
            <person name="Yoshioka M."/>
            <person name="Yuasa S."/>
            <person name="Matsumura K."/>
            <person name="Kimura K."/>
            <person name="Shiomi T."/>
            <person name="Kimura N."/>
            <person name="Shukunami C."/>
            <person name="Okada Y."/>
            <person name="Mukai M."/>
            <person name="Shin H."/>
            <person name="Yozu R."/>
            <person name="Sata M."/>
            <person name="Ogawa S."/>
            <person name="Hiraki Y."/>
            <person name="Fukuda K."/>
        </authorList>
    </citation>
    <scope>FUNCTION</scope>
    <scope>TISSUE SPECIFICITY</scope>
</reference>
<name>CNMD_HUMAN</name>
<evidence type="ECO:0000250" key="1"/>
<evidence type="ECO:0000255" key="2"/>
<evidence type="ECO:0000255" key="3">
    <source>
        <dbReference type="PROSITE-ProRule" id="PRU00255"/>
    </source>
</evidence>
<evidence type="ECO:0000256" key="4">
    <source>
        <dbReference type="SAM" id="MobiDB-lite"/>
    </source>
</evidence>
<evidence type="ECO:0000269" key="5">
    <source>
    </source>
</evidence>
<evidence type="ECO:0000303" key="6">
    <source>
    </source>
</evidence>
<evidence type="ECO:0000305" key="7"/>
<evidence type="ECO:0000312" key="8">
    <source>
        <dbReference type="HGNC" id="HGNC:17005"/>
    </source>
</evidence>
<organism>
    <name type="scientific">Homo sapiens</name>
    <name type="common">Human</name>
    <dbReference type="NCBI Taxonomy" id="9606"/>
    <lineage>
        <taxon>Eukaryota</taxon>
        <taxon>Metazoa</taxon>
        <taxon>Chordata</taxon>
        <taxon>Craniata</taxon>
        <taxon>Vertebrata</taxon>
        <taxon>Euteleostomi</taxon>
        <taxon>Mammalia</taxon>
        <taxon>Eutheria</taxon>
        <taxon>Euarchontoglires</taxon>
        <taxon>Primates</taxon>
        <taxon>Haplorrhini</taxon>
        <taxon>Catarrhini</taxon>
        <taxon>Hominidae</taxon>
        <taxon>Homo</taxon>
    </lineage>
</organism>
<comment type="function">
    <text evidence="5">Bifunctional growth regulator that stimulates the growth of cultured chondrocytes in the presence of basic fibroblast growth factor (FGF) but inhibits the growth of cultured vascular endothelial cells. May contribute to the rapid growth of cartilage and vascular invasion prior to the replacement of cartilage by bone during endochondral bone development. Inhibits in vitro tube formation and mobilization of endothelial cells. Plays a role as antiangiogenic factor in cardiac valves to suppress neovascularization.</text>
</comment>
<comment type="interaction">
    <interactant intactId="EBI-10696063">
        <id>O75829-2</id>
    </interactant>
    <interactant intactId="EBI-17686856">
        <id>Q95HB9</id>
        <label>HLA-DPA1</label>
    </interactant>
    <organismsDiffer>false</organismsDiffer>
    <experiments>3</experiments>
</comment>
<comment type="interaction">
    <interactant intactId="EBI-10696063">
        <id>O75829-2</id>
    </interactant>
    <interactant intactId="EBI-10243654">
        <id>Q5BVD1</id>
        <label>TTMP</label>
    </interactant>
    <organismsDiffer>false</organismsDiffer>
    <experiments>3</experiments>
</comment>
<comment type="subcellular location">
    <molecule>Chondromodulin-1</molecule>
    <subcellularLocation>
        <location>Secreted</location>
        <location>Extracellular space</location>
        <location>Extracellular matrix</location>
    </subcellularLocation>
    <text>Accumulated in the inter-territorial matrix of cartilage.</text>
</comment>
<comment type="subcellular location">
    <molecule>Chondrosurfactant protein</molecule>
    <subcellularLocation>
        <location evidence="7">Endomembrane system</location>
        <topology evidence="7">Single-pass membrane protein</topology>
    </subcellularLocation>
</comment>
<comment type="alternative products">
    <event type="alternative splicing"/>
    <isoform>
        <id>O75829-1</id>
        <name>1</name>
        <sequence type="displayed"/>
    </isoform>
    <isoform>
        <id>O75829-2</id>
        <name>2</name>
        <sequence type="described" ref="VSP_038380"/>
    </isoform>
</comment>
<comment type="tissue specificity">
    <text evidence="5">Detected in cartilage and cardiac valves (at protein level). Detected in the laminae fibrosa, spongiosa and ventricularis layers of normal cardiac valves (at protein level). Expression is decreased cardiac valves of patients with valvular heart disease (at protein level). Weakly expressed in chondrosarcoma.</text>
</comment>
<comment type="developmental stage">
    <text>Expressed at 9 weeks in developing cartilagenous bone rudiments.</text>
</comment>
<comment type="PTM">
    <text>After cleavage, the post-translationally modified ChM-I is secreted as a glycoprotein.</text>
</comment>
<comment type="similarity">
    <text evidence="7">Belongs to the chondromodulin-1 family.</text>
</comment>